<feature type="chain" id="PRO_1000052338" description="Large ribosomal subunit protein uL24">
    <location>
        <begin position="1"/>
        <end position="104"/>
    </location>
</feature>
<gene>
    <name evidence="1" type="primary">rplX</name>
    <name type="ordered locus">YPN_3848</name>
    <name type="ORF">YP516_4371</name>
</gene>
<sequence length="104" mass="11347">MAAKIRRDDEVIVLTGKDKGKRGKVKNVLSSGKVIVEGINLVKKHQKPVPALNQPGGIVEKEAAIQVSNLALFNATTGKADRVGFRFEDGKKVRFFKSTSETIK</sequence>
<protein>
    <recommendedName>
        <fullName evidence="1">Large ribosomal subunit protein uL24</fullName>
    </recommendedName>
    <alternativeName>
        <fullName evidence="2">50S ribosomal protein L24</fullName>
    </alternativeName>
</protein>
<proteinExistence type="inferred from homology"/>
<name>RL24_YERPN</name>
<keyword id="KW-0687">Ribonucleoprotein</keyword>
<keyword id="KW-0689">Ribosomal protein</keyword>
<keyword id="KW-0694">RNA-binding</keyword>
<keyword id="KW-0699">rRNA-binding</keyword>
<accession>Q1CCV5</accession>
<accession>D1Q2L0</accession>
<organism>
    <name type="scientific">Yersinia pestis bv. Antiqua (strain Nepal516)</name>
    <dbReference type="NCBI Taxonomy" id="377628"/>
    <lineage>
        <taxon>Bacteria</taxon>
        <taxon>Pseudomonadati</taxon>
        <taxon>Pseudomonadota</taxon>
        <taxon>Gammaproteobacteria</taxon>
        <taxon>Enterobacterales</taxon>
        <taxon>Yersiniaceae</taxon>
        <taxon>Yersinia</taxon>
    </lineage>
</organism>
<comment type="function">
    <text evidence="1">One of two assembly initiator proteins, it binds directly to the 5'-end of the 23S rRNA, where it nucleates assembly of the 50S subunit.</text>
</comment>
<comment type="function">
    <text evidence="1">One of the proteins that surrounds the polypeptide exit tunnel on the outside of the subunit.</text>
</comment>
<comment type="subunit">
    <text evidence="1">Part of the 50S ribosomal subunit.</text>
</comment>
<comment type="similarity">
    <text evidence="1">Belongs to the universal ribosomal protein uL24 family.</text>
</comment>
<reference key="1">
    <citation type="journal article" date="2006" name="J. Bacteriol.">
        <title>Complete genome sequence of Yersinia pestis strains Antiqua and Nepal516: evidence of gene reduction in an emerging pathogen.</title>
        <authorList>
            <person name="Chain P.S.G."/>
            <person name="Hu P."/>
            <person name="Malfatti S.A."/>
            <person name="Radnedge L."/>
            <person name="Larimer F."/>
            <person name="Vergez L.M."/>
            <person name="Worsham P."/>
            <person name="Chu M.C."/>
            <person name="Andersen G.L."/>
        </authorList>
    </citation>
    <scope>NUCLEOTIDE SEQUENCE [LARGE SCALE GENOMIC DNA]</scope>
    <source>
        <strain>Nepal516</strain>
    </source>
</reference>
<reference key="2">
    <citation type="submission" date="2009-04" db="EMBL/GenBank/DDBJ databases">
        <title>Yersinia pestis Nepal516A whole genome shotgun sequencing project.</title>
        <authorList>
            <person name="Plunkett G. III"/>
            <person name="Anderson B.D."/>
            <person name="Baumler D.J."/>
            <person name="Burland V."/>
            <person name="Cabot E.L."/>
            <person name="Glasner J.D."/>
            <person name="Mau B."/>
            <person name="Neeno-Eckwall E."/>
            <person name="Perna N.T."/>
            <person name="Munk A.C."/>
            <person name="Tapia R."/>
            <person name="Green L.D."/>
            <person name="Rogers Y.C."/>
            <person name="Detter J.C."/>
            <person name="Bruce D.C."/>
            <person name="Brettin T.S."/>
        </authorList>
    </citation>
    <scope>NUCLEOTIDE SEQUENCE [LARGE SCALE GENOMIC DNA]</scope>
    <source>
        <strain>Nepal516</strain>
    </source>
</reference>
<evidence type="ECO:0000255" key="1">
    <source>
        <dbReference type="HAMAP-Rule" id="MF_01326"/>
    </source>
</evidence>
<evidence type="ECO:0000305" key="2"/>
<dbReference type="EMBL" id="CP000305">
    <property type="protein sequence ID" value="ABG20175.1"/>
    <property type="molecule type" value="Genomic_DNA"/>
</dbReference>
<dbReference type="EMBL" id="ACNQ01000019">
    <property type="protein sequence ID" value="EEO74763.1"/>
    <property type="molecule type" value="Genomic_DNA"/>
</dbReference>
<dbReference type="RefSeq" id="WP_002213327.1">
    <property type="nucleotide sequence ID" value="NZ_ACNQ01000019.1"/>
</dbReference>
<dbReference type="SMR" id="Q1CCV5"/>
<dbReference type="GeneID" id="57974384"/>
<dbReference type="KEGG" id="ypn:YPN_3848"/>
<dbReference type="HOGENOM" id="CLU_093315_2_2_6"/>
<dbReference type="Proteomes" id="UP000008936">
    <property type="component" value="Chromosome"/>
</dbReference>
<dbReference type="GO" id="GO:1990904">
    <property type="term" value="C:ribonucleoprotein complex"/>
    <property type="evidence" value="ECO:0007669"/>
    <property type="project" value="UniProtKB-KW"/>
</dbReference>
<dbReference type="GO" id="GO:0005840">
    <property type="term" value="C:ribosome"/>
    <property type="evidence" value="ECO:0007669"/>
    <property type="project" value="UniProtKB-KW"/>
</dbReference>
<dbReference type="GO" id="GO:0019843">
    <property type="term" value="F:rRNA binding"/>
    <property type="evidence" value="ECO:0007669"/>
    <property type="project" value="UniProtKB-UniRule"/>
</dbReference>
<dbReference type="GO" id="GO:0003735">
    <property type="term" value="F:structural constituent of ribosome"/>
    <property type="evidence" value="ECO:0007669"/>
    <property type="project" value="InterPro"/>
</dbReference>
<dbReference type="GO" id="GO:0006412">
    <property type="term" value="P:translation"/>
    <property type="evidence" value="ECO:0007669"/>
    <property type="project" value="UniProtKB-UniRule"/>
</dbReference>
<dbReference type="CDD" id="cd06089">
    <property type="entry name" value="KOW_RPL26"/>
    <property type="match status" value="1"/>
</dbReference>
<dbReference type="FunFam" id="2.30.30.30:FF:000004">
    <property type="entry name" value="50S ribosomal protein L24"/>
    <property type="match status" value="1"/>
</dbReference>
<dbReference type="Gene3D" id="2.30.30.30">
    <property type="match status" value="1"/>
</dbReference>
<dbReference type="HAMAP" id="MF_01326_B">
    <property type="entry name" value="Ribosomal_uL24_B"/>
    <property type="match status" value="1"/>
</dbReference>
<dbReference type="InterPro" id="IPR005824">
    <property type="entry name" value="KOW"/>
</dbReference>
<dbReference type="InterPro" id="IPR014722">
    <property type="entry name" value="Rib_uL2_dom2"/>
</dbReference>
<dbReference type="InterPro" id="IPR003256">
    <property type="entry name" value="Ribosomal_uL24"/>
</dbReference>
<dbReference type="InterPro" id="IPR005825">
    <property type="entry name" value="Ribosomal_uL24_CS"/>
</dbReference>
<dbReference type="InterPro" id="IPR041988">
    <property type="entry name" value="Ribosomal_uL24_KOW"/>
</dbReference>
<dbReference type="InterPro" id="IPR008991">
    <property type="entry name" value="Translation_prot_SH3-like_sf"/>
</dbReference>
<dbReference type="NCBIfam" id="TIGR01079">
    <property type="entry name" value="rplX_bact"/>
    <property type="match status" value="1"/>
</dbReference>
<dbReference type="PANTHER" id="PTHR12903">
    <property type="entry name" value="MITOCHONDRIAL RIBOSOMAL PROTEIN L24"/>
    <property type="match status" value="1"/>
</dbReference>
<dbReference type="Pfam" id="PF00467">
    <property type="entry name" value="KOW"/>
    <property type="match status" value="1"/>
</dbReference>
<dbReference type="Pfam" id="PF17136">
    <property type="entry name" value="ribosomal_L24"/>
    <property type="match status" value="1"/>
</dbReference>
<dbReference type="SMART" id="SM00739">
    <property type="entry name" value="KOW"/>
    <property type="match status" value="1"/>
</dbReference>
<dbReference type="SUPFAM" id="SSF50104">
    <property type="entry name" value="Translation proteins SH3-like domain"/>
    <property type="match status" value="1"/>
</dbReference>
<dbReference type="PROSITE" id="PS01108">
    <property type="entry name" value="RIBOSOMAL_L24"/>
    <property type="match status" value="1"/>
</dbReference>